<keyword id="KW-0903">Direct protein sequencing</keyword>
<keyword id="KW-1015">Disulfide bond</keyword>
<keyword id="KW-0372">Hormone</keyword>
<keyword id="KW-1185">Reference proteome</keyword>
<keyword id="KW-0964">Secreted</keyword>
<keyword id="KW-0732">Signal</keyword>
<keyword id="KW-0838">Vasoactive</keyword>
<proteinExistence type="evidence at protein level"/>
<accession>P13205</accession>
<dbReference type="EMBL" id="M25297">
    <property type="protein sequence ID" value="AAA57269.1"/>
    <property type="molecule type" value="mRNA"/>
</dbReference>
<dbReference type="EMBL" id="M60731">
    <property type="protein sequence ID" value="AAA41456.1"/>
    <property type="molecule type" value="Genomic_DNA"/>
</dbReference>
<dbReference type="EMBL" id="M60266">
    <property type="protein sequence ID" value="AAA41455.1"/>
    <property type="molecule type" value="Genomic_DNA"/>
</dbReference>
<dbReference type="PIR" id="A30162">
    <property type="entry name" value="A30162"/>
</dbReference>
<dbReference type="RefSeq" id="NP_113733.1">
    <property type="nucleotide sequence ID" value="NM_031545.1"/>
</dbReference>
<dbReference type="FunCoup" id="P13205">
    <property type="interactions" value="69"/>
</dbReference>
<dbReference type="STRING" id="10116.ENSRNOP00000010778"/>
<dbReference type="PhosphoSitePlus" id="P13205"/>
<dbReference type="PaxDb" id="10116-ENSRNOP00000010778"/>
<dbReference type="Ensembl" id="ENSRNOT00000010779.6">
    <property type="protein sequence ID" value="ENSRNOP00000010778.3"/>
    <property type="gene ID" value="ENSRNOG00000008141.6"/>
</dbReference>
<dbReference type="GeneID" id="25105"/>
<dbReference type="KEGG" id="rno:25105"/>
<dbReference type="AGR" id="RGD:3194"/>
<dbReference type="CTD" id="4879"/>
<dbReference type="RGD" id="3194">
    <property type="gene designation" value="Nppb"/>
</dbReference>
<dbReference type="eggNOG" id="ENOG502SD0X">
    <property type="taxonomic scope" value="Eukaryota"/>
</dbReference>
<dbReference type="GeneTree" id="ENSGT00940000154513"/>
<dbReference type="HOGENOM" id="CLU_158067_0_0_1"/>
<dbReference type="InParanoid" id="P13205"/>
<dbReference type="OrthoDB" id="79783at9989"/>
<dbReference type="PhylomeDB" id="P13205"/>
<dbReference type="TreeFam" id="TF106304"/>
<dbReference type="PRO" id="PR:P13205"/>
<dbReference type="Proteomes" id="UP000002494">
    <property type="component" value="Chromosome 5"/>
</dbReference>
<dbReference type="Bgee" id="ENSRNOG00000008141">
    <property type="expression patterns" value="Expressed in heart and 1 other cell type or tissue"/>
</dbReference>
<dbReference type="GO" id="GO:0005737">
    <property type="term" value="C:cytoplasm"/>
    <property type="evidence" value="ECO:0000318"/>
    <property type="project" value="GO_Central"/>
</dbReference>
<dbReference type="GO" id="GO:0005615">
    <property type="term" value="C:extracellular space"/>
    <property type="evidence" value="ECO:0000314"/>
    <property type="project" value="RGD"/>
</dbReference>
<dbReference type="GO" id="GO:0048471">
    <property type="term" value="C:perinuclear region of cytoplasm"/>
    <property type="evidence" value="ECO:0000314"/>
    <property type="project" value="RGD"/>
</dbReference>
<dbReference type="GO" id="GO:0032991">
    <property type="term" value="C:protein-containing complex"/>
    <property type="evidence" value="ECO:0000266"/>
    <property type="project" value="RGD"/>
</dbReference>
<dbReference type="GO" id="GO:0005179">
    <property type="term" value="F:hormone activity"/>
    <property type="evidence" value="ECO:0000314"/>
    <property type="project" value="RGD"/>
</dbReference>
<dbReference type="GO" id="GO:0051427">
    <property type="term" value="F:hormone receptor binding"/>
    <property type="evidence" value="ECO:0000266"/>
    <property type="project" value="RGD"/>
</dbReference>
<dbReference type="GO" id="GO:0005102">
    <property type="term" value="F:signaling receptor binding"/>
    <property type="evidence" value="ECO:0000266"/>
    <property type="project" value="RGD"/>
</dbReference>
<dbReference type="GO" id="GO:0097746">
    <property type="term" value="P:blood vessel diameter maintenance"/>
    <property type="evidence" value="ECO:0007669"/>
    <property type="project" value="UniProtKB-KW"/>
</dbReference>
<dbReference type="GO" id="GO:0014898">
    <property type="term" value="P:cardiac muscle hypertrophy in response to stress"/>
    <property type="evidence" value="ECO:0000266"/>
    <property type="project" value="RGD"/>
</dbReference>
<dbReference type="GO" id="GO:0061049">
    <property type="term" value="P:cell growth involved in cardiac muscle cell development"/>
    <property type="evidence" value="ECO:0000270"/>
    <property type="project" value="RGD"/>
</dbReference>
<dbReference type="GO" id="GO:0071260">
    <property type="term" value="P:cellular response to mechanical stimulus"/>
    <property type="evidence" value="ECO:0000270"/>
    <property type="project" value="RGD"/>
</dbReference>
<dbReference type="GO" id="GO:0006182">
    <property type="term" value="P:cGMP biosynthetic process"/>
    <property type="evidence" value="ECO:0000266"/>
    <property type="project" value="RGD"/>
</dbReference>
<dbReference type="GO" id="GO:0019934">
    <property type="term" value="P:cGMP-mediated signaling"/>
    <property type="evidence" value="ECO:0000318"/>
    <property type="project" value="GO_Central"/>
</dbReference>
<dbReference type="GO" id="GO:0060976">
    <property type="term" value="P:coronary vasculature development"/>
    <property type="evidence" value="ECO:0000266"/>
    <property type="project" value="RGD"/>
</dbReference>
<dbReference type="GO" id="GO:0001935">
    <property type="term" value="P:endothelial cell proliferation"/>
    <property type="evidence" value="ECO:0000266"/>
    <property type="project" value="RGD"/>
</dbReference>
<dbReference type="GO" id="GO:0007507">
    <property type="term" value="P:heart development"/>
    <property type="evidence" value="ECO:0000270"/>
    <property type="project" value="RGD"/>
</dbReference>
<dbReference type="GO" id="GO:0048872">
    <property type="term" value="P:homeostasis of number of cells"/>
    <property type="evidence" value="ECO:0000266"/>
    <property type="project" value="RGD"/>
</dbReference>
<dbReference type="GO" id="GO:0000165">
    <property type="term" value="P:MAPK cascade"/>
    <property type="evidence" value="ECO:0000266"/>
    <property type="project" value="RGD"/>
</dbReference>
<dbReference type="GO" id="GO:0030308">
    <property type="term" value="P:negative regulation of cell growth"/>
    <property type="evidence" value="ECO:0000314"/>
    <property type="project" value="RGD"/>
</dbReference>
<dbReference type="GO" id="GO:1904055">
    <property type="term" value="P:negative regulation of cholangiocyte proliferation"/>
    <property type="evidence" value="ECO:0000314"/>
    <property type="project" value="RGD"/>
</dbReference>
<dbReference type="GO" id="GO:0048662">
    <property type="term" value="P:negative regulation of smooth muscle cell proliferation"/>
    <property type="evidence" value="ECO:0000314"/>
    <property type="project" value="RGD"/>
</dbReference>
<dbReference type="GO" id="GO:0003085">
    <property type="term" value="P:negative regulation of systemic arterial blood pressure"/>
    <property type="evidence" value="ECO:0000314"/>
    <property type="project" value="RGD"/>
</dbReference>
<dbReference type="GO" id="GO:0007218">
    <property type="term" value="P:neuropeptide signaling pathway"/>
    <property type="evidence" value="ECO:0000318"/>
    <property type="project" value="GO_Central"/>
</dbReference>
<dbReference type="GO" id="GO:0010753">
    <property type="term" value="P:positive regulation of cGMP-mediated signaling"/>
    <property type="evidence" value="ECO:0000314"/>
    <property type="project" value="RGD"/>
</dbReference>
<dbReference type="GO" id="GO:1903816">
    <property type="term" value="P:positive regulation of collecting lymphatic vessel constriction"/>
    <property type="evidence" value="ECO:0000314"/>
    <property type="project" value="RGD"/>
</dbReference>
<dbReference type="GO" id="GO:0035810">
    <property type="term" value="P:positive regulation of urine volume"/>
    <property type="evidence" value="ECO:0000314"/>
    <property type="project" value="RGD"/>
</dbReference>
<dbReference type="GO" id="GO:0006457">
    <property type="term" value="P:protein folding"/>
    <property type="evidence" value="ECO:0000266"/>
    <property type="project" value="RGD"/>
</dbReference>
<dbReference type="GO" id="GO:0007168">
    <property type="term" value="P:receptor guanylyl cyclase signaling pathway"/>
    <property type="evidence" value="ECO:0000250"/>
    <property type="project" value="UniProtKB"/>
</dbReference>
<dbReference type="GO" id="GO:1904681">
    <property type="term" value="P:response to 3-methylcholanthrene"/>
    <property type="evidence" value="ECO:0000270"/>
    <property type="project" value="RGD"/>
</dbReference>
<dbReference type="GO" id="GO:0051592">
    <property type="term" value="P:response to calcium ion"/>
    <property type="evidence" value="ECO:0000270"/>
    <property type="project" value="RGD"/>
</dbReference>
<dbReference type="GO" id="GO:0001666">
    <property type="term" value="P:response to hypoxia"/>
    <property type="evidence" value="ECO:0000270"/>
    <property type="project" value="RGD"/>
</dbReference>
<dbReference type="GO" id="GO:0032496">
    <property type="term" value="P:response to lipopolysaccharide"/>
    <property type="evidence" value="ECO:0000270"/>
    <property type="project" value="RGD"/>
</dbReference>
<dbReference type="GO" id="GO:0007584">
    <property type="term" value="P:response to nutrient"/>
    <property type="evidence" value="ECO:0000270"/>
    <property type="project" value="RGD"/>
</dbReference>
<dbReference type="GO" id="GO:0031667">
    <property type="term" value="P:response to nutrient levels"/>
    <property type="evidence" value="ECO:0000266"/>
    <property type="project" value="RGD"/>
</dbReference>
<dbReference type="GO" id="GO:0070482">
    <property type="term" value="P:response to oxygen levels"/>
    <property type="evidence" value="ECO:0000266"/>
    <property type="project" value="RGD"/>
</dbReference>
<dbReference type="GO" id="GO:0043434">
    <property type="term" value="P:response to peptide hormone"/>
    <property type="evidence" value="ECO:0000270"/>
    <property type="project" value="RGD"/>
</dbReference>
<dbReference type="GO" id="GO:0009410">
    <property type="term" value="P:response to xenobiotic stimulus"/>
    <property type="evidence" value="ECO:0000270"/>
    <property type="project" value="RGD"/>
</dbReference>
<dbReference type="InterPro" id="IPR000663">
    <property type="entry name" value="Natr_peptide"/>
</dbReference>
<dbReference type="InterPro" id="IPR030480">
    <property type="entry name" value="Natr_peptide_CS"/>
</dbReference>
<dbReference type="InterPro" id="IPR050787">
    <property type="entry name" value="Natriuretic_peptide"/>
</dbReference>
<dbReference type="InterPro" id="IPR002408">
    <property type="entry name" value="Natriuretic_peptide_brain"/>
</dbReference>
<dbReference type="PANTHER" id="PTHR14066">
    <property type="entry name" value="ATRIAL NATRIURETIC FACTOR PRECURSOR"/>
    <property type="match status" value="1"/>
</dbReference>
<dbReference type="PANTHER" id="PTHR14066:SF10">
    <property type="entry name" value="NATRIURETIC PEPTIDES B"/>
    <property type="match status" value="1"/>
</dbReference>
<dbReference type="Pfam" id="PF00212">
    <property type="entry name" value="ANP"/>
    <property type="match status" value="1"/>
</dbReference>
<dbReference type="PRINTS" id="PR00712">
    <property type="entry name" value="BNATPEPTIDE"/>
</dbReference>
<dbReference type="SMART" id="SM00183">
    <property type="entry name" value="NAT_PEP"/>
    <property type="match status" value="1"/>
</dbReference>
<dbReference type="PROSITE" id="PS00263">
    <property type="entry name" value="NATRIURETIC_PEPTIDE"/>
    <property type="match status" value="1"/>
</dbReference>
<sequence>MDLQKVLPQMILLLLFLNLSPLGGHSHPLGSPSQSPEQSTMQKLLELIREKSEEMAQRQLSKDQGPTKELLKRVLRSQDSAFRIQERLRNSKMAHSSSCFGQKIDRIGAVSRLGCDGLRLF</sequence>
<gene>
    <name type="primary">Nppb</name>
</gene>
<protein>
    <recommendedName>
        <fullName>Natriuretic peptides B</fullName>
    </recommendedName>
    <alternativeName>
        <fullName evidence="1">Brain natriuretic factor prohormone</fullName>
        <shortName evidence="2">preproBNP</shortName>
        <shortName evidence="1">proBNP</shortName>
    </alternativeName>
    <alternativeName>
        <fullName evidence="14">Gamma-brain natriuretic peptide</fullName>
    </alternativeName>
    <alternativeName>
        <fullName evidence="10">Iso-ANP</fullName>
    </alternativeName>
    <component>
        <recommendedName>
            <fullName evidence="14">Brain natriuretic peptide 45</fullName>
            <shortName evidence="14">BNP-45</shortName>
        </recommendedName>
        <alternativeName>
            <fullName evidence="14">5 kDa cardiac natriuretic peptide</fullName>
        </alternativeName>
        <alternativeName>
            <fullName evidence="11">Brain natriuretic peptide</fullName>
            <shortName evidence="11">BNP</shortName>
        </alternativeName>
    </component>
</protein>
<organism>
    <name type="scientific">Rattus norvegicus</name>
    <name type="common">Rat</name>
    <dbReference type="NCBI Taxonomy" id="10116"/>
    <lineage>
        <taxon>Eukaryota</taxon>
        <taxon>Metazoa</taxon>
        <taxon>Chordata</taxon>
        <taxon>Craniata</taxon>
        <taxon>Vertebrata</taxon>
        <taxon>Euteleostomi</taxon>
        <taxon>Mammalia</taxon>
        <taxon>Eutheria</taxon>
        <taxon>Euarchontoglires</taxon>
        <taxon>Glires</taxon>
        <taxon>Rodentia</taxon>
        <taxon>Myomorpha</taxon>
        <taxon>Muroidea</taxon>
        <taxon>Muridae</taxon>
        <taxon>Murinae</taxon>
        <taxon>Rattus</taxon>
    </lineage>
</organism>
<evidence type="ECO:0000250" key="1">
    <source>
        <dbReference type="UniProtKB" id="P16860"/>
    </source>
</evidence>
<evidence type="ECO:0000250" key="2">
    <source>
        <dbReference type="UniProtKB" id="P40753"/>
    </source>
</evidence>
<evidence type="ECO:0000269" key="3">
    <source>
    </source>
</evidence>
<evidence type="ECO:0000269" key="4">
    <source>
    </source>
</evidence>
<evidence type="ECO:0000269" key="5">
    <source>
    </source>
</evidence>
<evidence type="ECO:0000269" key="6">
    <source>
    </source>
</evidence>
<evidence type="ECO:0000269" key="7">
    <source>
    </source>
</evidence>
<evidence type="ECO:0000269" key="8">
    <source>
    </source>
</evidence>
<evidence type="ECO:0000269" key="9">
    <source>
    </source>
</evidence>
<evidence type="ECO:0000303" key="10">
    <source>
    </source>
</evidence>
<evidence type="ECO:0000303" key="11">
    <source>
    </source>
</evidence>
<evidence type="ECO:0000303" key="12">
    <source>
    </source>
</evidence>
<evidence type="ECO:0000303" key="13">
    <source>
    </source>
</evidence>
<evidence type="ECO:0000303" key="14">
    <source>
    </source>
</evidence>
<evidence type="ECO:0000305" key="15"/>
<reference key="1">
    <citation type="journal article" date="1989" name="Biochem. Biophys. Res. Commun.">
        <title>Cloning and sequence analysis of cDNA encoding a precursor for rat brain natriuretic peptide.</title>
        <authorList>
            <person name="Kojima M."/>
            <person name="Minamino N."/>
            <person name="Kangawa K."/>
            <person name="Matsuo H."/>
        </authorList>
    </citation>
    <scope>NUCLEOTIDE SEQUENCE [MRNA]</scope>
    <source>
        <tissue evidence="11">Heart atrium</tissue>
    </source>
</reference>
<reference key="2">
    <citation type="journal article" date="1990" name="Biochem. Biophys. Res. Commun.">
        <title>Organization of the gene for iso-rANP, a rat B-type natriuretic peptide.</title>
        <authorList>
            <person name="Roy R.N."/>
            <person name="Flynn T.G."/>
        </authorList>
    </citation>
    <scope>NUCLEOTIDE SEQUENCE [GENOMIC DNA]</scope>
</reference>
<reference key="3">
    <citation type="journal article" date="1991" name="Mol. Endocrinol.">
        <title>Differential expression of natriuretic peptide genes in cardiac and extracardiac tissues.</title>
        <authorList>
            <person name="Dagnino L."/>
            <person name="Drouin J."/>
            <person name="Nemer M."/>
        </authorList>
    </citation>
    <scope>NUCLEOTIDE SEQUENCE [GENOMIC DNA]</scope>
    <scope>TISSUE SPECIFICITY</scope>
    <scope>DEVELOPMENTAL STAGE</scope>
</reference>
<reference key="4">
    <citation type="journal article" date="1989" name="Biochem. Biophys. Res. Commun.">
        <title>Isolation and identification of rat brain natriuretic peptides in cardiac atrium.</title>
        <authorList>
            <person name="Abuyara M."/>
            <person name="Hino J."/>
            <person name="Minamino N."/>
            <person name="Kangawa K."/>
            <person name="Matsuo H."/>
        </authorList>
    </citation>
    <scope>PROTEIN SEQUENCE OF 27-121 AND 77-121</scope>
    <scope>TISSUE SPECIFICITY</scope>
    <source>
        <tissue evidence="14">Heart atrium</tissue>
    </source>
</reference>
<reference key="5">
    <citation type="journal article" date="1989" name="Biochem. Biophys. Res. Commun.">
        <title>Isolation and sequence determination of rat cardiac natriuretic peptide.</title>
        <authorList>
            <person name="Kambayashi Y."/>
            <person name="Nakao K."/>
            <person name="Itoh H."/>
            <person name="Hosoda K."/>
            <person name="Saito Y."/>
            <person name="Yamada T."/>
            <person name="Mukoyama M."/>
            <person name="Arai H."/>
            <person name="Shirikami G."/>
            <person name="Suga S."/>
            <person name="Ogawa Y."/>
            <person name="Jougasaki M."/>
            <person name="Minamino N."/>
            <person name="Kangawa K."/>
            <person name="Matsuo H."/>
            <person name="Inouye K."/>
            <person name="Imura H."/>
        </authorList>
    </citation>
    <scope>PROTEIN SEQUENCE OF 77-121</scope>
    <scope>SUBCELLULAR LOCATION (BRAIN NATRIURETIC PEPTIDE 45)</scope>
    <source>
        <tissue evidence="13">Heart atrium</tissue>
    </source>
</reference>
<reference key="6">
    <citation type="journal article" date="1989" name="Biochem. Biophys. Res. Commun.">
        <title>Isolation and characterization of iso-rANP, a new natriuretic peptide from rat atria.</title>
        <authorList>
            <person name="Flynn T.G."/>
            <person name="Brar A."/>
            <person name="Tremblay L."/>
            <person name="Sarda I."/>
            <person name="Lyons C."/>
            <person name="Jennings D.B."/>
        </authorList>
    </citation>
    <scope>PROTEIN SEQUENCE OF 77-121</scope>
    <scope>FUNCTION</scope>
    <scope>DISULFIDE BOND</scope>
    <source>
        <tissue evidence="12">Heart atrium</tissue>
    </source>
</reference>
<reference key="7">
    <citation type="journal article" date="1989" name="Biochem. Biophys. Res. Commun.">
        <title>Occurrence of a novel cardiac natriuretic peptide in rats.</title>
        <authorList>
            <person name="Itoh H."/>
            <person name="Nakao K."/>
            <person name="Kambayashi Y."/>
            <person name="Hosoda K."/>
            <person name="Saito Y."/>
            <person name="Yamada T."/>
            <person name="Mukoyama M."/>
            <person name="Arai H."/>
            <person name="Shirakami G."/>
            <person name="Suga S."/>
            <person name="Yoshida I."/>
            <person name="Inouye K."/>
            <person name="Imura H."/>
        </authorList>
    </citation>
    <scope>PROTEIN SEQUENCE OF 99-115</scope>
    <scope>FUNCTION (BRAIN NATRIURETIC PEPTIDE 45)</scope>
    <scope>SUBCELLULAR LOCATION (BRAIN NATRIURETIC PEPTIDE 45)</scope>
</reference>
<reference key="8">
    <citation type="journal article" date="1997" name="J. Biol. Chem.">
        <title>Stretch-induced hypertrophic growth of cardiocytes and processing of brain-type natriuretic peptide are controlled by proprotein-processing endoprotease furin.</title>
        <authorList>
            <person name="Sawada Y."/>
            <person name="Suda M."/>
            <person name="Yokoyama H."/>
            <person name="Kanda T."/>
            <person name="Sakamaki T."/>
            <person name="Tanaka S."/>
            <person name="Nagai R."/>
            <person name="Abe S."/>
            <person name="Takeuchi T."/>
        </authorList>
    </citation>
    <scope>FUNCTION</scope>
    <scope>TISSUE SPECIFICITY</scope>
    <scope>INDUCTION BY MECHANICAL STRETCH</scope>
    <scope>PROTEOLYTIC PROCESSING BY FURIN</scope>
</reference>
<reference key="9">
    <citation type="journal article" date="2019" name="J. Cell. Physiol.">
        <title>CHIP attenuates lipopolysaccharide-induced cardiac hypertrophy and apoptosis by promoting NFATc3 proteasomal degradation.</title>
        <authorList>
            <person name="Chao C.N."/>
            <person name="Lai C.H."/>
            <person name="Badrealam K.F."/>
            <person name="Lo J.F."/>
            <person name="Shen C.Y."/>
            <person name="Chen C.H."/>
            <person name="Chen R.J."/>
            <person name="Viswanadha V.P."/>
            <person name="Kuo W.W."/>
            <person name="Huang C.Y."/>
        </authorList>
    </citation>
    <scope>INDUCTION BY LIPOPOLYSACCHARIDES</scope>
</reference>
<feature type="signal peptide" evidence="7">
    <location>
        <begin position="1"/>
        <end position="26"/>
    </location>
</feature>
<feature type="peptide" id="PRO_0000001538" description="Natriuretic peptides B">
    <location>
        <begin position="27"/>
        <end position="121"/>
    </location>
</feature>
<feature type="peptide" id="PRO_0000001539" description="Brain natriuretic peptide 45" evidence="6 7 9">
    <location>
        <begin position="77"/>
        <end position="121"/>
    </location>
</feature>
<feature type="site" description="Cleavage; by FURIN" evidence="9">
    <location>
        <begin position="76"/>
        <end position="77"/>
    </location>
</feature>
<feature type="site" description="Cleavage; by FAP" evidence="1">
    <location>
        <begin position="91"/>
        <end position="92"/>
    </location>
</feature>
<feature type="disulfide bond" evidence="5">
    <location>
        <begin position="99"/>
        <end position="115"/>
    </location>
</feature>
<feature type="sequence conflict" description="In Ref. 2; AAA41456." evidence="15" ref="2">
    <original>L</original>
    <variation>V</variation>
    <location>
        <position position="15"/>
    </location>
</feature>
<feature type="sequence conflict" description="In Ref. 6; AA sequence." evidence="15" ref="6">
    <original>L</original>
    <variation>Q</variation>
    <location>
        <position position="120"/>
    </location>
</feature>
<comment type="function">
    <molecule>Brain natriuretic peptide 45</molecule>
    <text evidence="2 5 9">Cardiac hormone that plays a key role in mediating cardio-renal homeostasis (PubMed:2525380, PubMed:9252368). May also function as a paracrine antifibrotic factor in the heart (By similarity). Acts by specifically binding and stimulating NPR1 to produce cGMP, which in turn activates effector proteins that drive various biological responses (By similarity). Likely involved in regulating the extracellular fluid volume and maintaining the fluid-electrolyte balance through natriuresis, diuresis, kaluresis and chloruresis (PubMed:2525380, PubMed:9252368).</text>
</comment>
<comment type="subcellular location">
    <molecule>Brain natriuretic peptide 45</molecule>
    <subcellularLocation>
        <location evidence="4 6">Secreted</location>
    </subcellularLocation>
</comment>
<comment type="tissue specificity">
    <text evidence="3">Expressed in the atria and ventricles, but at much lower levels than NPPA (PubMed:1837590). Expression levels in the ventricles are slightly higher than in the atria (PubMed:1837590). Very low levels of expression detected in the brain, hypothalamus, lung and aorta (PubMed:1837590).</text>
</comment>
<comment type="tissue specificity">
    <molecule>Brain natriuretic peptide 45</molecule>
    <text evidence="7 9">Atria (at protein level) (PubMed:2673236). Cardiocytes (at protein level) (PubMed:9252368).</text>
</comment>
<comment type="developmental stage">
    <text evidence="3">Expressed in the atria and ventricles throughout postnatal development and in adults.</text>
</comment>
<comment type="induction">
    <text evidence="8 9">Up-regulated in cardiocytes in response to stretching for 48hr (PubMed:9252368). Induced by lipopolysaccharides (PubMed:30980393).</text>
</comment>
<comment type="PTM">
    <text evidence="1 9">The precursor molecule is proteolytically cleaved by the endoprotease Furin to produce brain natriuretic peptide 45 (PubMed:9252368). May undergo further proteolytic cleavage by various proteases such as DPP4, MME and possibly FAP, to give rise to a variety of shorter peptides (By similarity). May be cleaved at Ser-91 by the prolyl endopeptidase FAP (seprase) activity (in vitro) (By similarity). May be degraded by IDE (By similarity). During IDE degradation, the resulting products initially increase the activation of NPR1 and can also stimulate NPR2 to produce cGMP before the fragments are completely degraded and inactivated by IDE (in vitro) (By similarity).</text>
</comment>
<comment type="similarity">
    <text evidence="15">Belongs to the natriuretic peptide family.</text>
</comment>
<name>ANFB_RAT</name>